<feature type="chain" id="PRO_0000266973" description="Probable GTP-binding protein EngB">
    <location>
        <begin position="1"/>
        <end position="196"/>
    </location>
</feature>
<feature type="domain" description="EngB-type G" evidence="1">
    <location>
        <begin position="22"/>
        <end position="193"/>
    </location>
</feature>
<feature type="binding site" evidence="1">
    <location>
        <begin position="30"/>
        <end position="37"/>
    </location>
    <ligand>
        <name>GTP</name>
        <dbReference type="ChEBI" id="CHEBI:37565"/>
    </ligand>
</feature>
<feature type="binding site" evidence="1">
    <location>
        <position position="37"/>
    </location>
    <ligand>
        <name>Mg(2+)</name>
        <dbReference type="ChEBI" id="CHEBI:18420"/>
    </ligand>
</feature>
<feature type="binding site" evidence="1">
    <location>
        <begin position="57"/>
        <end position="61"/>
    </location>
    <ligand>
        <name>GTP</name>
        <dbReference type="ChEBI" id="CHEBI:37565"/>
    </ligand>
</feature>
<feature type="binding site" evidence="1">
    <location>
        <position position="59"/>
    </location>
    <ligand>
        <name>Mg(2+)</name>
        <dbReference type="ChEBI" id="CHEBI:18420"/>
    </ligand>
</feature>
<feature type="binding site" evidence="1">
    <location>
        <begin position="75"/>
        <end position="78"/>
    </location>
    <ligand>
        <name>GTP</name>
        <dbReference type="ChEBI" id="CHEBI:37565"/>
    </ligand>
</feature>
<feature type="binding site" evidence="1">
    <location>
        <begin position="142"/>
        <end position="145"/>
    </location>
    <ligand>
        <name>GTP</name>
        <dbReference type="ChEBI" id="CHEBI:37565"/>
    </ligand>
</feature>
<feature type="binding site" evidence="1">
    <location>
        <begin position="172"/>
        <end position="174"/>
    </location>
    <ligand>
        <name>GTP</name>
        <dbReference type="ChEBI" id="CHEBI:37565"/>
    </ligand>
</feature>
<name>ENGB_SYNAS</name>
<dbReference type="EMBL" id="CP000252">
    <property type="protein sequence ID" value="ABC78233.1"/>
    <property type="molecule type" value="Genomic_DNA"/>
</dbReference>
<dbReference type="RefSeq" id="WP_011418252.1">
    <property type="nucleotide sequence ID" value="NC_007759.1"/>
</dbReference>
<dbReference type="SMR" id="Q2LVW9"/>
<dbReference type="FunCoup" id="Q2LVW9">
    <property type="interactions" value="346"/>
</dbReference>
<dbReference type="STRING" id="56780.SYN_00589"/>
<dbReference type="KEGG" id="sat:SYN_00589"/>
<dbReference type="eggNOG" id="COG0218">
    <property type="taxonomic scope" value="Bacteria"/>
</dbReference>
<dbReference type="HOGENOM" id="CLU_033732_3_0_7"/>
<dbReference type="InParanoid" id="Q2LVW9"/>
<dbReference type="OrthoDB" id="9804921at2"/>
<dbReference type="Proteomes" id="UP000001933">
    <property type="component" value="Chromosome"/>
</dbReference>
<dbReference type="GO" id="GO:0005829">
    <property type="term" value="C:cytosol"/>
    <property type="evidence" value="ECO:0007669"/>
    <property type="project" value="TreeGrafter"/>
</dbReference>
<dbReference type="GO" id="GO:0005525">
    <property type="term" value="F:GTP binding"/>
    <property type="evidence" value="ECO:0007669"/>
    <property type="project" value="UniProtKB-UniRule"/>
</dbReference>
<dbReference type="GO" id="GO:0046872">
    <property type="term" value="F:metal ion binding"/>
    <property type="evidence" value="ECO:0007669"/>
    <property type="project" value="UniProtKB-KW"/>
</dbReference>
<dbReference type="GO" id="GO:0000917">
    <property type="term" value="P:division septum assembly"/>
    <property type="evidence" value="ECO:0007669"/>
    <property type="project" value="UniProtKB-KW"/>
</dbReference>
<dbReference type="CDD" id="cd01876">
    <property type="entry name" value="YihA_EngB"/>
    <property type="match status" value="1"/>
</dbReference>
<dbReference type="FunFam" id="3.40.50.300:FF:000098">
    <property type="entry name" value="Probable GTP-binding protein EngB"/>
    <property type="match status" value="1"/>
</dbReference>
<dbReference type="Gene3D" id="3.40.50.300">
    <property type="entry name" value="P-loop containing nucleotide triphosphate hydrolases"/>
    <property type="match status" value="1"/>
</dbReference>
<dbReference type="HAMAP" id="MF_00321">
    <property type="entry name" value="GTPase_EngB"/>
    <property type="match status" value="1"/>
</dbReference>
<dbReference type="InterPro" id="IPR030393">
    <property type="entry name" value="G_ENGB_dom"/>
</dbReference>
<dbReference type="InterPro" id="IPR006073">
    <property type="entry name" value="GTP-bd"/>
</dbReference>
<dbReference type="InterPro" id="IPR019987">
    <property type="entry name" value="GTP-bd_ribosome_bio_YsxC"/>
</dbReference>
<dbReference type="InterPro" id="IPR027417">
    <property type="entry name" value="P-loop_NTPase"/>
</dbReference>
<dbReference type="NCBIfam" id="TIGR03598">
    <property type="entry name" value="GTPase_YsxC"/>
    <property type="match status" value="1"/>
</dbReference>
<dbReference type="PANTHER" id="PTHR11649:SF13">
    <property type="entry name" value="ENGB-TYPE G DOMAIN-CONTAINING PROTEIN"/>
    <property type="match status" value="1"/>
</dbReference>
<dbReference type="PANTHER" id="PTHR11649">
    <property type="entry name" value="MSS1/TRME-RELATED GTP-BINDING PROTEIN"/>
    <property type="match status" value="1"/>
</dbReference>
<dbReference type="Pfam" id="PF01926">
    <property type="entry name" value="MMR_HSR1"/>
    <property type="match status" value="1"/>
</dbReference>
<dbReference type="SUPFAM" id="SSF52540">
    <property type="entry name" value="P-loop containing nucleoside triphosphate hydrolases"/>
    <property type="match status" value="1"/>
</dbReference>
<dbReference type="PROSITE" id="PS51706">
    <property type="entry name" value="G_ENGB"/>
    <property type="match status" value="1"/>
</dbReference>
<evidence type="ECO:0000255" key="1">
    <source>
        <dbReference type="HAMAP-Rule" id="MF_00321"/>
    </source>
</evidence>
<keyword id="KW-0131">Cell cycle</keyword>
<keyword id="KW-0132">Cell division</keyword>
<keyword id="KW-0342">GTP-binding</keyword>
<keyword id="KW-0460">Magnesium</keyword>
<keyword id="KW-0479">Metal-binding</keyword>
<keyword id="KW-0547">Nucleotide-binding</keyword>
<keyword id="KW-1185">Reference proteome</keyword>
<keyword id="KW-0717">Septation</keyword>
<comment type="function">
    <text evidence="1">Necessary for normal cell division and for the maintenance of normal septation.</text>
</comment>
<comment type="cofactor">
    <cofactor evidence="1">
        <name>Mg(2+)</name>
        <dbReference type="ChEBI" id="CHEBI:18420"/>
    </cofactor>
</comment>
<comment type="similarity">
    <text evidence="1">Belongs to the TRAFAC class TrmE-Era-EngA-EngB-Septin-like GTPase superfamily. EngB GTPase family.</text>
</comment>
<sequence length="196" mass="22346">MKIVTVEFVKSATLPSGYPPGSLPEVAFVGRSNVGKSSLINTLLRRKQLARTSNTPGRTQLINFFNVNQELLFVDLPGYGFARVPEAVKREWGPMIETYLRDRECLRMVVFILDIRRDPSQEDLALKGWLDYYGRRTLFVLTKSDKLSRGESKRRQRSVQESLALPEMPLIFSAKTGLGRERILEEIRKAKGEARS</sequence>
<gene>
    <name evidence="1" type="primary">engB</name>
    <name type="ordered locus">SYNAS_23540</name>
    <name type="ORF">SYN_00589</name>
</gene>
<organism>
    <name type="scientific">Syntrophus aciditrophicus (strain SB)</name>
    <dbReference type="NCBI Taxonomy" id="56780"/>
    <lineage>
        <taxon>Bacteria</taxon>
        <taxon>Pseudomonadati</taxon>
        <taxon>Thermodesulfobacteriota</taxon>
        <taxon>Syntrophia</taxon>
        <taxon>Syntrophales</taxon>
        <taxon>Syntrophaceae</taxon>
        <taxon>Syntrophus</taxon>
    </lineage>
</organism>
<protein>
    <recommendedName>
        <fullName evidence="1">Probable GTP-binding protein EngB</fullName>
    </recommendedName>
</protein>
<reference key="1">
    <citation type="journal article" date="2007" name="Proc. Natl. Acad. Sci. U.S.A.">
        <title>The genome of Syntrophus aciditrophicus: life at the thermodynamic limit of microbial growth.</title>
        <authorList>
            <person name="McInerney M.J."/>
            <person name="Rohlin L."/>
            <person name="Mouttaki H."/>
            <person name="Kim U."/>
            <person name="Krupp R.S."/>
            <person name="Rios-Hernandez L."/>
            <person name="Sieber J."/>
            <person name="Struchtemeyer C.G."/>
            <person name="Bhattacharyya A."/>
            <person name="Campbell J.W."/>
            <person name="Gunsalus R.P."/>
        </authorList>
    </citation>
    <scope>NUCLEOTIDE SEQUENCE [LARGE SCALE GENOMIC DNA]</scope>
    <source>
        <strain>SB</strain>
    </source>
</reference>
<proteinExistence type="inferred from homology"/>
<accession>Q2LVW9</accession>